<name>RSXE_ECOLI</name>
<feature type="chain" id="PRO_0000214269" description="Ion-translocating oxidoreductase complex subunit E">
    <location>
        <begin position="1"/>
        <end position="231"/>
    </location>
</feature>
<feature type="topological domain" description="Cytoplasmic" evidence="7">
    <location>
        <begin position="1"/>
        <end position="17"/>
    </location>
</feature>
<feature type="transmembrane region" description="Helical" evidence="1">
    <location>
        <begin position="18"/>
        <end position="38"/>
    </location>
</feature>
<feature type="transmembrane region" description="Helical" evidence="1">
    <location>
        <begin position="39"/>
        <end position="59"/>
    </location>
</feature>
<feature type="topological domain" description="Cytoplasmic" evidence="2">
    <location>
        <begin position="60"/>
        <end position="62"/>
    </location>
</feature>
<feature type="transmembrane region" description="Helical" evidence="1">
    <location>
        <begin position="63"/>
        <end position="83"/>
    </location>
</feature>
<feature type="topological domain" description="Periplasmic" evidence="2">
    <location>
        <begin position="84"/>
        <end position="85"/>
    </location>
</feature>
<feature type="transmembrane region" description="Helical" evidence="1">
    <location>
        <begin position="86"/>
        <end position="106"/>
    </location>
</feature>
<feature type="topological domain" description="Cytoplasmic" evidence="2">
    <location>
        <begin position="107"/>
        <end position="124"/>
    </location>
</feature>
<feature type="transmembrane region" description="Helical" evidence="1">
    <location>
        <begin position="125"/>
        <end position="145"/>
    </location>
</feature>
<feature type="topological domain" description="Periplasmic" evidence="2">
    <location>
        <begin position="146"/>
        <end position="181"/>
    </location>
</feature>
<feature type="transmembrane region" description="Helical" evidence="1">
    <location>
        <begin position="182"/>
        <end position="202"/>
    </location>
</feature>
<feature type="topological domain" description="Cytoplasmic" evidence="2 4">
    <location>
        <begin position="203"/>
        <end position="231"/>
    </location>
</feature>
<keyword id="KW-0997">Cell inner membrane</keyword>
<keyword id="KW-1003">Cell membrane</keyword>
<keyword id="KW-0249">Electron transport</keyword>
<keyword id="KW-0472">Membrane</keyword>
<keyword id="KW-1185">Reference proteome</keyword>
<keyword id="KW-1278">Translocase</keyword>
<keyword id="KW-0812">Transmembrane</keyword>
<keyword id="KW-1133">Transmembrane helix</keyword>
<keyword id="KW-0813">Transport</keyword>
<proteinExistence type="evidence at protein level"/>
<dbReference type="EC" id="7.-.-.-" evidence="1 6"/>
<dbReference type="EMBL" id="U00096">
    <property type="protein sequence ID" value="AAC74704.1"/>
    <property type="molecule type" value="Genomic_DNA"/>
</dbReference>
<dbReference type="EMBL" id="AP009048">
    <property type="protein sequence ID" value="BAA15386.1"/>
    <property type="molecule type" value="Genomic_DNA"/>
</dbReference>
<dbReference type="PIR" id="B64920">
    <property type="entry name" value="B64920"/>
</dbReference>
<dbReference type="RefSeq" id="NP_416149.1">
    <property type="nucleotide sequence ID" value="NC_000913.3"/>
</dbReference>
<dbReference type="RefSeq" id="WP_001289652.1">
    <property type="nucleotide sequence ID" value="NZ_STEB01000003.1"/>
</dbReference>
<dbReference type="SMR" id="P77179"/>
<dbReference type="BioGRID" id="4260257">
    <property type="interactions" value="117"/>
</dbReference>
<dbReference type="FunCoup" id="P77179">
    <property type="interactions" value="273"/>
</dbReference>
<dbReference type="STRING" id="511145.b1632"/>
<dbReference type="TCDB" id="3.D.6.1.4">
    <property type="family name" value="the ion (h(+) or na(+))-translocating nadh:ferredoxin oxidoreductase (nfo or rnf) family"/>
</dbReference>
<dbReference type="PaxDb" id="511145-b1632"/>
<dbReference type="EnsemblBacteria" id="AAC74704">
    <property type="protein sequence ID" value="AAC74704"/>
    <property type="gene ID" value="b1632"/>
</dbReference>
<dbReference type="GeneID" id="947509"/>
<dbReference type="KEGG" id="ecj:JW1624"/>
<dbReference type="KEGG" id="eco:b1632"/>
<dbReference type="KEGG" id="ecoc:C3026_09375"/>
<dbReference type="PATRIC" id="fig|1411691.4.peg.629"/>
<dbReference type="EchoBASE" id="EB3697"/>
<dbReference type="eggNOG" id="COG4660">
    <property type="taxonomic scope" value="Bacteria"/>
</dbReference>
<dbReference type="HOGENOM" id="CLU_046659_1_0_6"/>
<dbReference type="InParanoid" id="P77179"/>
<dbReference type="OMA" id="RIEVFHT"/>
<dbReference type="OrthoDB" id="9782945at2"/>
<dbReference type="PhylomeDB" id="P77179"/>
<dbReference type="BioCyc" id="EcoCyc:G6876-MONOMER"/>
<dbReference type="PRO" id="PR:P77179"/>
<dbReference type="Proteomes" id="UP000000625">
    <property type="component" value="Chromosome"/>
</dbReference>
<dbReference type="GO" id="GO:0005886">
    <property type="term" value="C:plasma membrane"/>
    <property type="evidence" value="ECO:0000314"/>
    <property type="project" value="EcoCyc"/>
</dbReference>
<dbReference type="GO" id="GO:0022900">
    <property type="term" value="P:electron transport chain"/>
    <property type="evidence" value="ECO:0007669"/>
    <property type="project" value="UniProtKB-UniRule"/>
</dbReference>
<dbReference type="HAMAP" id="MF_00478">
    <property type="entry name" value="RsxE_RnfE"/>
    <property type="match status" value="1"/>
</dbReference>
<dbReference type="InterPro" id="IPR003667">
    <property type="entry name" value="NqrDE/RnfAE"/>
</dbReference>
<dbReference type="InterPro" id="IPR010968">
    <property type="entry name" value="RnfE"/>
</dbReference>
<dbReference type="NCBIfam" id="NF009070">
    <property type="entry name" value="PRK12405.1"/>
    <property type="match status" value="1"/>
</dbReference>
<dbReference type="NCBIfam" id="TIGR01948">
    <property type="entry name" value="rnfE"/>
    <property type="match status" value="1"/>
</dbReference>
<dbReference type="PANTHER" id="PTHR30586">
    <property type="entry name" value="ELECTRON TRANSPORT COMPLEX PROTEIN RNFE"/>
    <property type="match status" value="1"/>
</dbReference>
<dbReference type="PANTHER" id="PTHR30586:SF0">
    <property type="entry name" value="ION-TRANSLOCATING OXIDOREDUCTASE COMPLEX SUBUNIT E"/>
    <property type="match status" value="1"/>
</dbReference>
<dbReference type="Pfam" id="PF02508">
    <property type="entry name" value="Rnf-Nqr"/>
    <property type="match status" value="1"/>
</dbReference>
<dbReference type="PIRSF" id="PIRSF006102">
    <property type="entry name" value="NQR_DE"/>
    <property type="match status" value="1"/>
</dbReference>
<accession>P77179</accession>
<organism>
    <name type="scientific">Escherichia coli (strain K12)</name>
    <dbReference type="NCBI Taxonomy" id="83333"/>
    <lineage>
        <taxon>Bacteria</taxon>
        <taxon>Pseudomonadati</taxon>
        <taxon>Pseudomonadota</taxon>
        <taxon>Gammaproteobacteria</taxon>
        <taxon>Enterobacterales</taxon>
        <taxon>Enterobacteriaceae</taxon>
        <taxon>Escherichia</taxon>
    </lineage>
</organism>
<protein>
    <recommendedName>
        <fullName evidence="1 6">Ion-translocating oxidoreductase complex subunit E</fullName>
        <ecNumber evidence="1 6">7.-.-.-</ecNumber>
    </recommendedName>
    <alternativeName>
        <fullName evidence="1 6">Rsx electron transport complex subunit E</fullName>
    </alternativeName>
</protein>
<sequence length="231" mass="24459">MSEIKDVIVQGLWKNNSALVQLLGLCPLLAVTSTATNALGLGLATTLVLTLTNLTISTLRHWTPAEIRIPIYVMIIASVVSAVQMLINAYAFGLYQSLGIFIPLIVTNCIVVGRAEAFAAKKGPALSALDGFSIGMGATCAMFVLGSLREIIGNGTLFDGADALLGSWAKVLRVEIFHTDSPFLLAMLPPGAFIGLGLMLAGKYLIDERMKKRRAEAAAERALPNGETGNV</sequence>
<reference key="1">
    <citation type="journal article" date="1996" name="DNA Res.">
        <title>A 570-kb DNA sequence of the Escherichia coli K-12 genome corresponding to the 28.0-40.1 min region on the linkage map.</title>
        <authorList>
            <person name="Aiba H."/>
            <person name="Baba T."/>
            <person name="Fujita K."/>
            <person name="Hayashi K."/>
            <person name="Inada T."/>
            <person name="Isono K."/>
            <person name="Itoh T."/>
            <person name="Kasai H."/>
            <person name="Kashimoto K."/>
            <person name="Kimura S."/>
            <person name="Kitakawa M."/>
            <person name="Kitagawa M."/>
            <person name="Makino K."/>
            <person name="Miki T."/>
            <person name="Mizobuchi K."/>
            <person name="Mori H."/>
            <person name="Mori T."/>
            <person name="Motomura K."/>
            <person name="Nakade S."/>
            <person name="Nakamura Y."/>
            <person name="Nashimoto H."/>
            <person name="Nishio Y."/>
            <person name="Oshima T."/>
            <person name="Saito N."/>
            <person name="Sampei G."/>
            <person name="Seki Y."/>
            <person name="Sivasundaram S."/>
            <person name="Tagami H."/>
            <person name="Takeda J."/>
            <person name="Takemoto K."/>
            <person name="Takeuchi Y."/>
            <person name="Wada C."/>
            <person name="Yamamoto Y."/>
            <person name="Horiuchi T."/>
        </authorList>
    </citation>
    <scope>NUCLEOTIDE SEQUENCE [LARGE SCALE GENOMIC DNA]</scope>
    <source>
        <strain>K12 / W3110 / ATCC 27325 / DSM 5911</strain>
    </source>
</reference>
<reference key="2">
    <citation type="journal article" date="1997" name="Science">
        <title>The complete genome sequence of Escherichia coli K-12.</title>
        <authorList>
            <person name="Blattner F.R."/>
            <person name="Plunkett G. III"/>
            <person name="Bloch C.A."/>
            <person name="Perna N.T."/>
            <person name="Burland V."/>
            <person name="Riley M."/>
            <person name="Collado-Vides J."/>
            <person name="Glasner J.D."/>
            <person name="Rode C.K."/>
            <person name="Mayhew G.F."/>
            <person name="Gregor J."/>
            <person name="Davis N.W."/>
            <person name="Kirkpatrick H.A."/>
            <person name="Goeden M.A."/>
            <person name="Rose D.J."/>
            <person name="Mau B."/>
            <person name="Shao Y."/>
        </authorList>
    </citation>
    <scope>NUCLEOTIDE SEQUENCE [LARGE SCALE GENOMIC DNA]</scope>
    <source>
        <strain>K12 / MG1655 / ATCC 47076</strain>
    </source>
</reference>
<reference key="3">
    <citation type="journal article" date="2006" name="Mol. Syst. Biol.">
        <title>Highly accurate genome sequences of Escherichia coli K-12 strains MG1655 and W3110.</title>
        <authorList>
            <person name="Hayashi K."/>
            <person name="Morooka N."/>
            <person name="Yamamoto Y."/>
            <person name="Fujita K."/>
            <person name="Isono K."/>
            <person name="Choi S."/>
            <person name="Ohtsubo E."/>
            <person name="Baba T."/>
            <person name="Wanner B.L."/>
            <person name="Mori H."/>
            <person name="Horiuchi T."/>
        </authorList>
    </citation>
    <scope>NUCLEOTIDE SEQUENCE [LARGE SCALE GENOMIC DNA]</scope>
    <source>
        <strain>K12 / W3110 / ATCC 27325 / DSM 5911</strain>
    </source>
</reference>
<reference key="4">
    <citation type="journal article" date="1999" name="Proc. Natl. Acad. Sci. U.S.A.">
        <title>Divergent evolution of membrane protein topology: the Escherichia coli RnfA and RnfE homologues.</title>
        <authorList>
            <person name="Saeaef A."/>
            <person name="Johansson M."/>
            <person name="Wallin E."/>
            <person name="von Heijne G."/>
        </authorList>
    </citation>
    <scope>TOPOLOGY</scope>
    <scope>SUBCELLULAR LOCATION</scope>
    <source>
        <strain>K12 / JM109 / ATCC 53323</strain>
    </source>
</reference>
<reference key="5">
    <citation type="journal article" date="2003" name="EMBO J.">
        <title>A reducing system of the superoxide sensor SoxR in Escherichia coli.</title>
        <authorList>
            <person name="Koo M.S."/>
            <person name="Lee J.H."/>
            <person name="Rah S.Y."/>
            <person name="Yeo W.S."/>
            <person name="Lee J.W."/>
            <person name="Lee K.L."/>
            <person name="Koh Y.S."/>
            <person name="Kang S.O."/>
            <person name="Roe J.H."/>
        </authorList>
    </citation>
    <scope>FUNCTION</scope>
    <scope>SUBUNIT</scope>
    <scope>GENE NAME</scope>
</reference>
<reference key="6">
    <citation type="journal article" date="2005" name="Science">
        <title>Global topology analysis of the Escherichia coli inner membrane proteome.</title>
        <authorList>
            <person name="Daley D.O."/>
            <person name="Rapp M."/>
            <person name="Granseth E."/>
            <person name="Melen K."/>
            <person name="Drew D."/>
            <person name="von Heijne G."/>
        </authorList>
    </citation>
    <scope>TOPOLOGY [LARGE SCALE ANALYSIS]</scope>
    <scope>SUBCELLULAR LOCATION</scope>
    <source>
        <strain>K12 / MG1655 / ATCC 47076</strain>
    </source>
</reference>
<evidence type="ECO:0000255" key="1">
    <source>
        <dbReference type="HAMAP-Rule" id="MF_00478"/>
    </source>
</evidence>
<evidence type="ECO:0000269" key="2">
    <source>
    </source>
</evidence>
<evidence type="ECO:0000269" key="3">
    <source>
    </source>
</evidence>
<evidence type="ECO:0000269" key="4">
    <source>
    </source>
</evidence>
<evidence type="ECO:0000303" key="5">
    <source>
    </source>
</evidence>
<evidence type="ECO:0000305" key="6"/>
<evidence type="ECO:0000305" key="7">
    <source>
    </source>
</evidence>
<evidence type="ECO:0000305" key="8">
    <source>
    </source>
</evidence>
<gene>
    <name evidence="1 5" type="primary">rsxE</name>
    <name type="synonym">rnfE</name>
    <name type="synonym">ydgQ</name>
    <name type="ordered locus">b1632</name>
    <name type="ordered locus">JW1624</name>
</gene>
<comment type="function">
    <text evidence="1 3">Part of a membrane-bound complex that couples electron transfer with translocation of ions across the membrane (By similarity). Required to maintain the reduced state of SoxR. Probably transfers electron from NAD(P)H to SoxR (PubMed:12773378).</text>
</comment>
<comment type="subunit">
    <text evidence="1 8">The complex is composed of six subunits: RsxA, RsxB, RsxC, RsxD, RsxE and RsxG.</text>
</comment>
<comment type="subcellular location">
    <subcellularLocation>
        <location evidence="1 2 4">Cell inner membrane</location>
        <topology evidence="1 4">Multi-pass membrane protein</topology>
    </subcellularLocation>
</comment>
<comment type="similarity">
    <text evidence="1">Belongs to the NqrDE/RnfAE family.</text>
</comment>